<keyword id="KW-0210">Decarboxylase</keyword>
<keyword id="KW-0456">Lyase</keyword>
<keyword id="KW-0665">Pyrimidine biosynthesis</keyword>
<accession>P99145</accession>
<accession>Q99UR4</accession>
<organism>
    <name type="scientific">Staphylococcus aureus (strain N315)</name>
    <dbReference type="NCBI Taxonomy" id="158879"/>
    <lineage>
        <taxon>Bacteria</taxon>
        <taxon>Bacillati</taxon>
        <taxon>Bacillota</taxon>
        <taxon>Bacilli</taxon>
        <taxon>Bacillales</taxon>
        <taxon>Staphylococcaceae</taxon>
        <taxon>Staphylococcus</taxon>
    </lineage>
</organism>
<name>PYRF_STAAN</name>
<proteinExistence type="evidence at protein level"/>
<reference key="1">
    <citation type="journal article" date="2001" name="Lancet">
        <title>Whole genome sequencing of meticillin-resistant Staphylococcus aureus.</title>
        <authorList>
            <person name="Kuroda M."/>
            <person name="Ohta T."/>
            <person name="Uchiyama I."/>
            <person name="Baba T."/>
            <person name="Yuzawa H."/>
            <person name="Kobayashi I."/>
            <person name="Cui L."/>
            <person name="Oguchi A."/>
            <person name="Aoki K."/>
            <person name="Nagai Y."/>
            <person name="Lian J.-Q."/>
            <person name="Ito T."/>
            <person name="Kanamori M."/>
            <person name="Matsumaru H."/>
            <person name="Maruyama A."/>
            <person name="Murakami H."/>
            <person name="Hosoyama A."/>
            <person name="Mizutani-Ui Y."/>
            <person name="Takahashi N.K."/>
            <person name="Sawano T."/>
            <person name="Inoue R."/>
            <person name="Kaito C."/>
            <person name="Sekimizu K."/>
            <person name="Hirakawa H."/>
            <person name="Kuhara S."/>
            <person name="Goto S."/>
            <person name="Yabuzaki J."/>
            <person name="Kanehisa M."/>
            <person name="Yamashita A."/>
            <person name="Oshima K."/>
            <person name="Furuya K."/>
            <person name="Yoshino C."/>
            <person name="Shiba T."/>
            <person name="Hattori M."/>
            <person name="Ogasawara N."/>
            <person name="Hayashi H."/>
            <person name="Hiramatsu K."/>
        </authorList>
    </citation>
    <scope>NUCLEOTIDE SEQUENCE [LARGE SCALE GENOMIC DNA]</scope>
    <source>
        <strain>N315</strain>
    </source>
</reference>
<reference key="2">
    <citation type="journal article" date="2005" name="J. Microbiol. Methods">
        <title>Correlation of proteomic and transcriptomic profiles of Staphylococcus aureus during the post-exponential phase of growth.</title>
        <authorList>
            <person name="Scherl A."/>
            <person name="Francois P."/>
            <person name="Bento M."/>
            <person name="Deshusses J.M."/>
            <person name="Charbonnier Y."/>
            <person name="Converset V."/>
            <person name="Huyghe A."/>
            <person name="Walter N."/>
            <person name="Hoogland C."/>
            <person name="Appel R.D."/>
            <person name="Sanchez J.-C."/>
            <person name="Zimmermann-Ivol C.G."/>
            <person name="Corthals G.L."/>
            <person name="Hochstrasser D.F."/>
            <person name="Schrenzel J."/>
        </authorList>
    </citation>
    <scope>IDENTIFICATION BY MASS SPECTROMETRY</scope>
    <source>
        <strain>N315</strain>
    </source>
</reference>
<reference key="3">
    <citation type="submission" date="2007-10" db="UniProtKB">
        <title>Shotgun proteomic analysis of total and membrane protein extracts of S. aureus strain N315.</title>
        <authorList>
            <person name="Vaezzadeh A.R."/>
            <person name="Deshusses J."/>
            <person name="Lescuyer P."/>
            <person name="Hochstrasser D.F."/>
        </authorList>
    </citation>
    <scope>IDENTIFICATION BY MASS SPECTROMETRY [LARGE SCALE ANALYSIS]</scope>
    <source>
        <strain>N315</strain>
    </source>
</reference>
<gene>
    <name evidence="1" type="primary">pyrF</name>
    <name type="ordered locus">SA1047</name>
</gene>
<feature type="chain" id="PRO_0000134576" description="Orotidine 5'-phosphate decarboxylase">
    <location>
        <begin position="1"/>
        <end position="230"/>
    </location>
</feature>
<feature type="active site" description="Proton donor" evidence="1">
    <location>
        <position position="60"/>
    </location>
</feature>
<feature type="binding site" evidence="1">
    <location>
        <position position="10"/>
    </location>
    <ligand>
        <name>substrate</name>
    </ligand>
</feature>
<feature type="binding site" evidence="1">
    <location>
        <position position="31"/>
    </location>
    <ligand>
        <name>substrate</name>
    </ligand>
</feature>
<feature type="binding site" evidence="1">
    <location>
        <begin position="58"/>
        <end position="67"/>
    </location>
    <ligand>
        <name>substrate</name>
    </ligand>
</feature>
<feature type="binding site" evidence="1">
    <location>
        <position position="117"/>
    </location>
    <ligand>
        <name>substrate</name>
    </ligand>
</feature>
<feature type="binding site" evidence="1">
    <location>
        <position position="179"/>
    </location>
    <ligand>
        <name>substrate</name>
    </ligand>
</feature>
<feature type="binding site" evidence="1">
    <location>
        <position position="188"/>
    </location>
    <ligand>
        <name>substrate</name>
    </ligand>
</feature>
<feature type="binding site" evidence="1">
    <location>
        <position position="208"/>
    </location>
    <ligand>
        <name>substrate</name>
    </ligand>
</feature>
<feature type="binding site" evidence="1">
    <location>
        <position position="209"/>
    </location>
    <ligand>
        <name>substrate</name>
    </ligand>
</feature>
<evidence type="ECO:0000255" key="1">
    <source>
        <dbReference type="HAMAP-Rule" id="MF_01200"/>
    </source>
</evidence>
<protein>
    <recommendedName>
        <fullName evidence="1">Orotidine 5'-phosphate decarboxylase</fullName>
        <ecNumber evidence="1">4.1.1.23</ecNumber>
    </recommendedName>
    <alternativeName>
        <fullName evidence="1">OMP decarboxylase</fullName>
        <shortName evidence="1">OMPDCase</shortName>
        <shortName evidence="1">OMPdecase</shortName>
    </alternativeName>
</protein>
<sequence length="230" mass="25619">MKDLPIIALDFESKEKVNQFLDLFDESLFVKVGMELFYQEGPQLINEIKERGHDVFLDLKLHDIPNTVGKAMEGLAKLNVDLVNVHAAGGVKMMSEAIKGLRKHNQHTKIIAVTQLTSTTEDMLRHEQNIQTSIEEAVLNYAKLANAAGLDGVVCSPLESRMLTEKLGTSFLKVTPGIRPKGASQDDQHRITTPEEARQLGSTHIVVGRPITQSDNPVESYHKIKESWLV</sequence>
<comment type="function">
    <text evidence="1">Catalyzes the decarboxylation of orotidine 5'-monophosphate (OMP) to uridine 5'-monophosphate (UMP).</text>
</comment>
<comment type="catalytic activity">
    <reaction evidence="1">
        <text>orotidine 5'-phosphate + H(+) = UMP + CO2</text>
        <dbReference type="Rhea" id="RHEA:11596"/>
        <dbReference type="ChEBI" id="CHEBI:15378"/>
        <dbReference type="ChEBI" id="CHEBI:16526"/>
        <dbReference type="ChEBI" id="CHEBI:57538"/>
        <dbReference type="ChEBI" id="CHEBI:57865"/>
        <dbReference type="EC" id="4.1.1.23"/>
    </reaction>
</comment>
<comment type="pathway">
    <text evidence="1">Pyrimidine metabolism; UMP biosynthesis via de novo pathway; UMP from orotate: step 2/2.</text>
</comment>
<comment type="subunit">
    <text evidence="1">Homodimer.</text>
</comment>
<comment type="similarity">
    <text evidence="1">Belongs to the OMP decarboxylase family. Type 1 subfamily.</text>
</comment>
<dbReference type="EC" id="4.1.1.23" evidence="1"/>
<dbReference type="EMBL" id="BA000018">
    <property type="protein sequence ID" value="BAB42299.1"/>
    <property type="molecule type" value="Genomic_DNA"/>
</dbReference>
<dbReference type="PIR" id="G89892">
    <property type="entry name" value="G89892"/>
</dbReference>
<dbReference type="RefSeq" id="WP_000654067.1">
    <property type="nucleotide sequence ID" value="NC_002745.2"/>
</dbReference>
<dbReference type="SMR" id="P99145"/>
<dbReference type="EnsemblBacteria" id="BAB42299">
    <property type="protein sequence ID" value="BAB42299"/>
    <property type="gene ID" value="BAB42299"/>
</dbReference>
<dbReference type="KEGG" id="sau:SA1047"/>
<dbReference type="HOGENOM" id="CLU_067069_1_1_9"/>
<dbReference type="UniPathway" id="UPA00070">
    <property type="reaction ID" value="UER00120"/>
</dbReference>
<dbReference type="GO" id="GO:0005829">
    <property type="term" value="C:cytosol"/>
    <property type="evidence" value="ECO:0007669"/>
    <property type="project" value="TreeGrafter"/>
</dbReference>
<dbReference type="GO" id="GO:0004590">
    <property type="term" value="F:orotidine-5'-phosphate decarboxylase activity"/>
    <property type="evidence" value="ECO:0007669"/>
    <property type="project" value="UniProtKB-UniRule"/>
</dbReference>
<dbReference type="GO" id="GO:0006207">
    <property type="term" value="P:'de novo' pyrimidine nucleobase biosynthetic process"/>
    <property type="evidence" value="ECO:0007669"/>
    <property type="project" value="InterPro"/>
</dbReference>
<dbReference type="GO" id="GO:0044205">
    <property type="term" value="P:'de novo' UMP biosynthetic process"/>
    <property type="evidence" value="ECO:0007669"/>
    <property type="project" value="UniProtKB-UniRule"/>
</dbReference>
<dbReference type="CDD" id="cd04725">
    <property type="entry name" value="OMP_decarboxylase_like"/>
    <property type="match status" value="1"/>
</dbReference>
<dbReference type="FunFam" id="3.20.20.70:FF:000015">
    <property type="entry name" value="Orotidine 5'-phosphate decarboxylase"/>
    <property type="match status" value="1"/>
</dbReference>
<dbReference type="Gene3D" id="3.20.20.70">
    <property type="entry name" value="Aldolase class I"/>
    <property type="match status" value="1"/>
</dbReference>
<dbReference type="HAMAP" id="MF_01200_B">
    <property type="entry name" value="OMPdecase_type1_B"/>
    <property type="match status" value="1"/>
</dbReference>
<dbReference type="InterPro" id="IPR013785">
    <property type="entry name" value="Aldolase_TIM"/>
</dbReference>
<dbReference type="InterPro" id="IPR014732">
    <property type="entry name" value="OMPdecase"/>
</dbReference>
<dbReference type="InterPro" id="IPR018089">
    <property type="entry name" value="OMPdecase_AS"/>
</dbReference>
<dbReference type="InterPro" id="IPR047596">
    <property type="entry name" value="OMPdecase_bac"/>
</dbReference>
<dbReference type="InterPro" id="IPR001754">
    <property type="entry name" value="OMPdeCOase_dom"/>
</dbReference>
<dbReference type="InterPro" id="IPR011060">
    <property type="entry name" value="RibuloseP-bd_barrel"/>
</dbReference>
<dbReference type="NCBIfam" id="NF001273">
    <property type="entry name" value="PRK00230.1"/>
    <property type="match status" value="1"/>
</dbReference>
<dbReference type="NCBIfam" id="TIGR01740">
    <property type="entry name" value="pyrF"/>
    <property type="match status" value="1"/>
</dbReference>
<dbReference type="PANTHER" id="PTHR32119">
    <property type="entry name" value="OROTIDINE 5'-PHOSPHATE DECARBOXYLASE"/>
    <property type="match status" value="1"/>
</dbReference>
<dbReference type="PANTHER" id="PTHR32119:SF2">
    <property type="entry name" value="OROTIDINE 5'-PHOSPHATE DECARBOXYLASE"/>
    <property type="match status" value="1"/>
</dbReference>
<dbReference type="Pfam" id="PF00215">
    <property type="entry name" value="OMPdecase"/>
    <property type="match status" value="1"/>
</dbReference>
<dbReference type="SMART" id="SM00934">
    <property type="entry name" value="OMPdecase"/>
    <property type="match status" value="1"/>
</dbReference>
<dbReference type="SUPFAM" id="SSF51366">
    <property type="entry name" value="Ribulose-phoshate binding barrel"/>
    <property type="match status" value="1"/>
</dbReference>
<dbReference type="PROSITE" id="PS00156">
    <property type="entry name" value="OMPDECASE"/>
    <property type="match status" value="1"/>
</dbReference>